<gene>
    <name evidence="1" type="primary">dsdA</name>
    <name type="ordered locus">EcolC_1303</name>
</gene>
<accession>B1IX96</accession>
<proteinExistence type="inferred from homology"/>
<comment type="catalytic activity">
    <reaction evidence="1">
        <text>D-serine = pyruvate + NH4(+)</text>
        <dbReference type="Rhea" id="RHEA:13977"/>
        <dbReference type="ChEBI" id="CHEBI:15361"/>
        <dbReference type="ChEBI" id="CHEBI:28938"/>
        <dbReference type="ChEBI" id="CHEBI:35247"/>
        <dbReference type="EC" id="4.3.1.18"/>
    </reaction>
</comment>
<comment type="cofactor">
    <cofactor evidence="1">
        <name>pyridoxal 5'-phosphate</name>
        <dbReference type="ChEBI" id="CHEBI:597326"/>
    </cofactor>
</comment>
<comment type="subunit">
    <text evidence="1">Monomer.</text>
</comment>
<comment type="similarity">
    <text evidence="1">Belongs to the serine/threonine dehydratase family. DsdA subfamily.</text>
</comment>
<keyword id="KW-0456">Lyase</keyword>
<keyword id="KW-0663">Pyridoxal phosphate</keyword>
<name>SDHD_ECOLC</name>
<organism>
    <name type="scientific">Escherichia coli (strain ATCC 8739 / DSM 1576 / NBRC 3972 / NCIMB 8545 / WDCM 00012 / Crooks)</name>
    <dbReference type="NCBI Taxonomy" id="481805"/>
    <lineage>
        <taxon>Bacteria</taxon>
        <taxon>Pseudomonadati</taxon>
        <taxon>Pseudomonadota</taxon>
        <taxon>Gammaproteobacteria</taxon>
        <taxon>Enterobacterales</taxon>
        <taxon>Enterobacteriaceae</taxon>
        <taxon>Escherichia</taxon>
    </lineage>
</organism>
<sequence>MENAKMNSLIAQYPLVKDLVALKETTWFNPGTTSLAEGLPYVGLTEQDVQDAHARLSRFAPYLAKAFPETAATGGIIESELVAIPAMQKRLEKEYQQPISGQLLLKKDSHLPISGSIKARGGIYEVLAHAEKLALEAGLLTLDDDYSKLLSPEFKQFFSQYSIAVGSTGNLGLSIGIMSARIGFKVTVHMSADARAWKKAKLRSHGVTVVEYEQDYGVAVEEGRKAAQSDPNCFFIDDENSRTLFLGYSVAGQRLKAQFAQQGRIVDADNPLFVYLPCGVGGGPGGVAFGLKLAFGDHVHCFFAEPTHSPCMLLGVHTGLHDQISVQDIGIDNLTAADGLAVGRASGFVGRAMERLLDGFYTLSDQTMYDMLGWLAQEEGIRLEPSALAGMAGPQRVCASVSYQQMHGFSAEQLRNTTHLVWATGGGMVPEEEMNQYLAKGR</sequence>
<dbReference type="EC" id="4.3.1.18" evidence="1"/>
<dbReference type="EMBL" id="CP000946">
    <property type="protein sequence ID" value="ACA76969.1"/>
    <property type="molecule type" value="Genomic_DNA"/>
</dbReference>
<dbReference type="RefSeq" id="WP_000426427.1">
    <property type="nucleotide sequence ID" value="NZ_MTFT01000028.1"/>
</dbReference>
<dbReference type="SMR" id="B1IX96"/>
<dbReference type="KEGG" id="ecl:EcolC_1303"/>
<dbReference type="HOGENOM" id="CLU_035707_0_0_6"/>
<dbReference type="GO" id="GO:0008721">
    <property type="term" value="F:D-serine ammonia-lyase activity"/>
    <property type="evidence" value="ECO:0007669"/>
    <property type="project" value="UniProtKB-EC"/>
</dbReference>
<dbReference type="GO" id="GO:0016836">
    <property type="term" value="F:hydro-lyase activity"/>
    <property type="evidence" value="ECO:0007669"/>
    <property type="project" value="UniProtKB-UniRule"/>
</dbReference>
<dbReference type="GO" id="GO:0030170">
    <property type="term" value="F:pyridoxal phosphate binding"/>
    <property type="evidence" value="ECO:0007669"/>
    <property type="project" value="InterPro"/>
</dbReference>
<dbReference type="GO" id="GO:0036088">
    <property type="term" value="P:D-serine catabolic process"/>
    <property type="evidence" value="ECO:0007669"/>
    <property type="project" value="TreeGrafter"/>
</dbReference>
<dbReference type="GO" id="GO:0009097">
    <property type="term" value="P:isoleucine biosynthetic process"/>
    <property type="evidence" value="ECO:0007669"/>
    <property type="project" value="TreeGrafter"/>
</dbReference>
<dbReference type="CDD" id="cd06447">
    <property type="entry name" value="D-Ser-dehyd"/>
    <property type="match status" value="1"/>
</dbReference>
<dbReference type="FunFam" id="3.40.50.1100:FF:000018">
    <property type="entry name" value="D-serine dehydratase"/>
    <property type="match status" value="1"/>
</dbReference>
<dbReference type="Gene3D" id="3.40.50.1100">
    <property type="match status" value="2"/>
</dbReference>
<dbReference type="HAMAP" id="MF_01030">
    <property type="entry name" value="D_Ser_dehydrat"/>
    <property type="match status" value="1"/>
</dbReference>
<dbReference type="InterPro" id="IPR011780">
    <property type="entry name" value="D_Ser_am_lyase"/>
</dbReference>
<dbReference type="InterPro" id="IPR050147">
    <property type="entry name" value="Ser/Thr_Dehydratase"/>
</dbReference>
<dbReference type="InterPro" id="IPR000634">
    <property type="entry name" value="Ser/Thr_deHydtase_PyrdxlP-BS"/>
</dbReference>
<dbReference type="InterPro" id="IPR001926">
    <property type="entry name" value="TrpB-like_PALP"/>
</dbReference>
<dbReference type="InterPro" id="IPR036052">
    <property type="entry name" value="TrpB-like_PALP_sf"/>
</dbReference>
<dbReference type="NCBIfam" id="TIGR02035">
    <property type="entry name" value="D_Ser_am_lyase"/>
    <property type="match status" value="1"/>
</dbReference>
<dbReference type="NCBIfam" id="NF002823">
    <property type="entry name" value="PRK02991.1"/>
    <property type="match status" value="1"/>
</dbReference>
<dbReference type="PANTHER" id="PTHR48078:SF9">
    <property type="entry name" value="D-SERINE DEHYDRATASE"/>
    <property type="match status" value="1"/>
</dbReference>
<dbReference type="PANTHER" id="PTHR48078">
    <property type="entry name" value="THREONINE DEHYDRATASE, MITOCHONDRIAL-RELATED"/>
    <property type="match status" value="1"/>
</dbReference>
<dbReference type="Pfam" id="PF00291">
    <property type="entry name" value="PALP"/>
    <property type="match status" value="1"/>
</dbReference>
<dbReference type="SUPFAM" id="SSF53686">
    <property type="entry name" value="Tryptophan synthase beta subunit-like PLP-dependent enzymes"/>
    <property type="match status" value="1"/>
</dbReference>
<dbReference type="PROSITE" id="PS00165">
    <property type="entry name" value="DEHYDRATASE_SER_THR"/>
    <property type="match status" value="1"/>
</dbReference>
<feature type="chain" id="PRO_1000084239" description="D-serine dehydratase">
    <location>
        <begin position="1"/>
        <end position="442"/>
    </location>
</feature>
<feature type="modified residue" description="N6-(pyridoxal phosphate)lysine" evidence="1">
    <location>
        <position position="118"/>
    </location>
</feature>
<reference key="1">
    <citation type="submission" date="2008-02" db="EMBL/GenBank/DDBJ databases">
        <title>Complete sequence of Escherichia coli C str. ATCC 8739.</title>
        <authorList>
            <person name="Copeland A."/>
            <person name="Lucas S."/>
            <person name="Lapidus A."/>
            <person name="Glavina del Rio T."/>
            <person name="Dalin E."/>
            <person name="Tice H."/>
            <person name="Bruce D."/>
            <person name="Goodwin L."/>
            <person name="Pitluck S."/>
            <person name="Kiss H."/>
            <person name="Brettin T."/>
            <person name="Detter J.C."/>
            <person name="Han C."/>
            <person name="Kuske C.R."/>
            <person name="Schmutz J."/>
            <person name="Larimer F."/>
            <person name="Land M."/>
            <person name="Hauser L."/>
            <person name="Kyrpides N."/>
            <person name="Mikhailova N."/>
            <person name="Ingram L."/>
            <person name="Richardson P."/>
        </authorList>
    </citation>
    <scope>NUCLEOTIDE SEQUENCE [LARGE SCALE GENOMIC DNA]</scope>
    <source>
        <strain>ATCC 8739 / DSM 1576 / NBRC 3972 / NCIMB 8545 / WDCM 00012 / Crooks</strain>
    </source>
</reference>
<evidence type="ECO:0000255" key="1">
    <source>
        <dbReference type="HAMAP-Rule" id="MF_01030"/>
    </source>
</evidence>
<protein>
    <recommendedName>
        <fullName evidence="1">D-serine dehydratase</fullName>
        <ecNumber evidence="1">4.3.1.18</ecNumber>
    </recommendedName>
    <alternativeName>
        <fullName evidence="1">D-serine deaminase</fullName>
        <shortName evidence="1">DSD</shortName>
    </alternativeName>
</protein>